<keyword id="KW-0025">Alternative splicing</keyword>
<keyword id="KW-0067">ATP-binding</keyword>
<keyword id="KW-0963">Cytoplasm</keyword>
<keyword id="KW-0460">Magnesium</keyword>
<keyword id="KW-0464">Manganese</keyword>
<keyword id="KW-0479">Metal-binding</keyword>
<keyword id="KW-0507">mRNA processing</keyword>
<keyword id="KW-0547">Nucleotide-binding</keyword>
<keyword id="KW-0548">Nucleotidyltransferase</keyword>
<keyword id="KW-0539">Nucleus</keyword>
<keyword id="KW-1267">Proteomics identification</keyword>
<keyword id="KW-1185">Reference proteome</keyword>
<keyword id="KW-0808">Transferase</keyword>
<comment type="function">
    <text evidence="5 6">Terminal nucleotidyltransferase that catalyzes preferentially the transfer of ATP and GTP on RNA 3' poly(A) tail creating a heterogeneous 3' poly(A) tail leading to mRNAs stabilization by protecting mRNAs from active deadenylation (PubMed:23376078, PubMed:30026317). Also functions as a catalytic subunit of a TRAMP-like complex which has a poly(A) RNA polymerase activity and is involved in a post-transcriptional quality control mechanism. Polyadenylation with short oligo(A) tails is required for the degradative activity of the exosome on several of its nuclear RNA substrates. Has no terminal uridylyltransferase activity, and does not play a role in replication-dependent histone mRNA degradation via uridylation (PubMed:23376078).</text>
</comment>
<comment type="catalytic activity">
    <reaction evidence="2">
        <text>RNA(n) + ATP = RNA(n)-3'-adenine ribonucleotide + diphosphate</text>
        <dbReference type="Rhea" id="RHEA:11332"/>
        <dbReference type="Rhea" id="RHEA-COMP:14527"/>
        <dbReference type="Rhea" id="RHEA-COMP:17347"/>
        <dbReference type="ChEBI" id="CHEBI:30616"/>
        <dbReference type="ChEBI" id="CHEBI:33019"/>
        <dbReference type="ChEBI" id="CHEBI:140395"/>
        <dbReference type="ChEBI" id="CHEBI:173115"/>
        <dbReference type="EC" id="2.7.7.19"/>
    </reaction>
</comment>
<comment type="cofactor">
    <cofactor evidence="1">
        <name>Mg(2+)</name>
        <dbReference type="ChEBI" id="CHEBI:18420"/>
    </cofactor>
    <cofactor evidence="1">
        <name>Mn(2+)</name>
        <dbReference type="ChEBI" id="CHEBI:29035"/>
    </cofactor>
</comment>
<comment type="subunit">
    <text>Component of a nuclear TRAMP-like complex, an ATP-dependent exosome regulatory complex consisting of a helicase (MTREX), an oligadenylate polymerase (TENT4B or TENT4A), and a substrate specific RNA-binding factor (ZCCHC7 or ZCCHC8). Several TRAMP-like complexes exist with specific compositions and are associated with nuclear, or nucleolar RNA exosomes.</text>
</comment>
<comment type="interaction">
    <interactant intactId="EBI-7851084">
        <id>Q5XG87</id>
    </interactant>
    <interactant intactId="EBI-910915">
        <id>O75581</id>
        <label>LRP6</label>
    </interactant>
    <organismsDiffer>false</organismsDiffer>
    <experiments>2</experiments>
</comment>
<comment type="subcellular location">
    <subcellularLocation>
        <location evidence="5">Cytoplasm</location>
    </subcellularLocation>
    <subcellularLocation>
        <location evidence="5">Nucleus</location>
        <location evidence="5">Nucleoplasm</location>
    </subcellularLocation>
    <text evidence="5">Excluded from nucleolus, weak staining detected in the cytoplasm.</text>
</comment>
<comment type="alternative products">
    <event type="alternative splicing"/>
    <isoform>
        <id>Q5XG87-1</id>
        <name>1</name>
        <name>l</name>
        <sequence type="displayed"/>
    </isoform>
    <isoform>
        <id>Q5XG87-2</id>
        <name>2</name>
        <name>s</name>
        <sequence type="described" ref="VSP_053732"/>
    </isoform>
</comment>
<comment type="miscellaneous">
    <molecule>Isoform 2</molecule>
    <text evidence="13">Exhibits poor nucleotidyl transferase activity.</text>
</comment>
<comment type="similarity">
    <text evidence="13">Belongs to the DNA polymerase type-B-like family.</text>
</comment>
<comment type="caution">
    <text evidence="13">Was originally thought to have DNA polymerase activity.</text>
</comment>
<comment type="sequence caution" evidence="13">
    <conflict type="frameshift">
        <sequence resource="EMBL-CDS" id="AAD45198"/>
    </conflict>
</comment>
<organism>
    <name type="scientific">Homo sapiens</name>
    <name type="common">Human</name>
    <dbReference type="NCBI Taxonomy" id="9606"/>
    <lineage>
        <taxon>Eukaryota</taxon>
        <taxon>Metazoa</taxon>
        <taxon>Chordata</taxon>
        <taxon>Craniata</taxon>
        <taxon>Vertebrata</taxon>
        <taxon>Euteleostomi</taxon>
        <taxon>Mammalia</taxon>
        <taxon>Eutheria</taxon>
        <taxon>Euarchontoglires</taxon>
        <taxon>Primates</taxon>
        <taxon>Haplorrhini</taxon>
        <taxon>Catarrhini</taxon>
        <taxon>Hominidae</taxon>
        <taxon>Homo</taxon>
    </lineage>
</organism>
<dbReference type="EC" id="2.7.7.19" evidence="2"/>
<dbReference type="EC" id="2.7.7.-" evidence="6"/>
<dbReference type="EMBL" id="AF089896">
    <property type="protein sequence ID" value="AAD45198.1"/>
    <property type="status" value="ALT_FRAME"/>
    <property type="molecule type" value="mRNA"/>
</dbReference>
<dbReference type="EMBL" id="AB005754">
    <property type="protein sequence ID" value="BAA24434.2"/>
    <property type="molecule type" value="mRNA"/>
</dbReference>
<dbReference type="EMBL" id="AY623114">
    <property type="protein sequence ID" value="AAT38110.1"/>
    <property type="molecule type" value="Genomic_DNA"/>
</dbReference>
<dbReference type="EMBL" id="AK289857">
    <property type="protein sequence ID" value="BAF82546.1"/>
    <property type="molecule type" value="mRNA"/>
</dbReference>
<dbReference type="EMBL" id="AC122710">
    <property type="status" value="NOT_ANNOTATED_CDS"/>
    <property type="molecule type" value="Genomic_DNA"/>
</dbReference>
<dbReference type="EMBL" id="CH471102">
    <property type="protein sequence ID" value="EAX08101.1"/>
    <property type="molecule type" value="Genomic_DNA"/>
</dbReference>
<dbReference type="EMBL" id="BC084567">
    <property type="protein sequence ID" value="AAH84567.2"/>
    <property type="molecule type" value="mRNA"/>
</dbReference>
<dbReference type="EMBL" id="BC117137">
    <property type="protein sequence ID" value="AAI17138.1"/>
    <property type="molecule type" value="mRNA"/>
</dbReference>
<dbReference type="EMBL" id="BC126106">
    <property type="protein sequence ID" value="AAI26107.1"/>
    <property type="molecule type" value="mRNA"/>
</dbReference>
<dbReference type="EMBL" id="KC424495">
    <property type="protein sequence ID" value="AGE92663.1"/>
    <property type="molecule type" value="mRNA"/>
</dbReference>
<dbReference type="CCDS" id="CCDS3871.2">
    <molecule id="Q5XG87-1"/>
</dbReference>
<dbReference type="RefSeq" id="NP_001165276.1">
    <property type="nucleotide sequence ID" value="NM_001171805.1"/>
</dbReference>
<dbReference type="RefSeq" id="NP_001165277.1">
    <property type="nucleotide sequence ID" value="NM_001171806.1"/>
</dbReference>
<dbReference type="RefSeq" id="NP_008930.2">
    <molecule id="Q5XG87-1"/>
    <property type="nucleotide sequence ID" value="NM_006999.6"/>
</dbReference>
<dbReference type="RefSeq" id="XP_005248291.1">
    <property type="nucleotide sequence ID" value="XM_005248234.3"/>
</dbReference>
<dbReference type="SMR" id="Q5XG87"/>
<dbReference type="BioGRID" id="116232">
    <property type="interactions" value="15"/>
</dbReference>
<dbReference type="ComplexPortal" id="CPX-2749">
    <property type="entry name" value="TRAMP complex, TENT4A-ZCCHC7 variant"/>
</dbReference>
<dbReference type="FunCoup" id="Q5XG87">
    <property type="interactions" value="3125"/>
</dbReference>
<dbReference type="IntAct" id="Q5XG87">
    <property type="interactions" value="5"/>
</dbReference>
<dbReference type="MINT" id="Q5XG87"/>
<dbReference type="STRING" id="9606.ENSP00000488642"/>
<dbReference type="ChEMBL" id="CHEMBL4680033"/>
<dbReference type="GlyCosmos" id="Q5XG87">
    <property type="glycosylation" value="1 site, 1 glycan"/>
</dbReference>
<dbReference type="GlyGen" id="Q5XG87">
    <property type="glycosylation" value="3 sites, 1 O-linked glycan (1 site)"/>
</dbReference>
<dbReference type="iPTMnet" id="Q5XG87"/>
<dbReference type="PhosphoSitePlus" id="Q5XG87"/>
<dbReference type="BioMuta" id="PAPD7"/>
<dbReference type="DMDM" id="60392922"/>
<dbReference type="jPOST" id="Q5XG87"/>
<dbReference type="MassIVE" id="Q5XG87"/>
<dbReference type="PaxDb" id="9606-ENSP00000230859"/>
<dbReference type="PeptideAtlas" id="Q5XG87"/>
<dbReference type="ProteomicsDB" id="65815">
    <molecule id="Q5XG87-1"/>
</dbReference>
<dbReference type="Pumba" id="Q5XG87"/>
<dbReference type="Antibodypedia" id="22404">
    <property type="antibodies" value="150 antibodies from 22 providers"/>
</dbReference>
<dbReference type="DNASU" id="11044"/>
<dbReference type="Ensembl" id="ENST00000230859.8">
    <molecule id="Q5XG87-1"/>
    <property type="protein sequence ID" value="ENSP00000230859.7"/>
    <property type="gene ID" value="ENSG00000112941.14"/>
</dbReference>
<dbReference type="GeneID" id="11044"/>
<dbReference type="KEGG" id="hsa:11044"/>
<dbReference type="MANE-Select" id="ENST00000230859.8">
    <property type="protein sequence ID" value="ENSP00000230859.7"/>
    <property type="RefSeq nucleotide sequence ID" value="NM_006999.6"/>
    <property type="RefSeq protein sequence ID" value="NP_008930.2"/>
</dbReference>
<dbReference type="UCSC" id="uc003jdx.1">
    <molecule id="Q5XG87-1"/>
    <property type="organism name" value="human"/>
</dbReference>
<dbReference type="AGR" id="HGNC:16705"/>
<dbReference type="CTD" id="11044"/>
<dbReference type="DisGeNET" id="11044"/>
<dbReference type="GeneCards" id="TENT4A"/>
<dbReference type="HGNC" id="HGNC:16705">
    <property type="gene designation" value="TENT4A"/>
</dbReference>
<dbReference type="HPA" id="ENSG00000112941">
    <property type="expression patterns" value="Low tissue specificity"/>
</dbReference>
<dbReference type="MIM" id="605198">
    <property type="type" value="gene"/>
</dbReference>
<dbReference type="neXtProt" id="NX_Q5XG87"/>
<dbReference type="OpenTargets" id="ENSG00000112941"/>
<dbReference type="PharmGKB" id="PA33523"/>
<dbReference type="VEuPathDB" id="HostDB:ENSG00000112941"/>
<dbReference type="eggNOG" id="KOG1906">
    <property type="taxonomic scope" value="Eukaryota"/>
</dbReference>
<dbReference type="GeneTree" id="ENSGT00940000157811"/>
<dbReference type="HOGENOM" id="CLU_013572_3_0_1"/>
<dbReference type="InParanoid" id="Q5XG87"/>
<dbReference type="OMA" id="KWGSRVH"/>
<dbReference type="OrthoDB" id="273917at2759"/>
<dbReference type="PAN-GO" id="Q5XG87">
    <property type="GO annotations" value="4 GO annotations based on evolutionary models"/>
</dbReference>
<dbReference type="TreeFam" id="TF313939"/>
<dbReference type="BRENDA" id="2.7.7.19">
    <property type="organism ID" value="2681"/>
</dbReference>
<dbReference type="PathwayCommons" id="Q5XG87"/>
<dbReference type="Reactome" id="R-HSA-6802952">
    <property type="pathway name" value="Signaling by BRAF and RAF1 fusions"/>
</dbReference>
<dbReference type="SignaLink" id="Q5XG87"/>
<dbReference type="BioGRID-ORCS" id="11044">
    <property type="hits" value="11 hits in 1157 CRISPR screens"/>
</dbReference>
<dbReference type="CD-CODE" id="91857CE7">
    <property type="entry name" value="Nucleolus"/>
</dbReference>
<dbReference type="ChiTaRS" id="PAPD7">
    <property type="organism name" value="human"/>
</dbReference>
<dbReference type="GenomeRNAi" id="11044"/>
<dbReference type="Pharos" id="Q5XG87">
    <property type="development level" value="Tbio"/>
</dbReference>
<dbReference type="PRO" id="PR:Q5XG87"/>
<dbReference type="Proteomes" id="UP000005640">
    <property type="component" value="Chromosome 5"/>
</dbReference>
<dbReference type="RNAct" id="Q5XG87">
    <property type="molecule type" value="protein"/>
</dbReference>
<dbReference type="Bgee" id="ENSG00000112941">
    <property type="expression patterns" value="Expressed in secondary oocyte and 200 other cell types or tissues"/>
</dbReference>
<dbReference type="ExpressionAtlas" id="Q5XG87">
    <property type="expression patterns" value="baseline and differential"/>
</dbReference>
<dbReference type="GO" id="GO:0005794">
    <property type="term" value="C:Golgi apparatus"/>
    <property type="evidence" value="ECO:0000314"/>
    <property type="project" value="HPA"/>
</dbReference>
<dbReference type="GO" id="GO:0031965">
    <property type="term" value="C:nuclear membrane"/>
    <property type="evidence" value="ECO:0000314"/>
    <property type="project" value="HPA"/>
</dbReference>
<dbReference type="GO" id="GO:0005730">
    <property type="term" value="C:nucleolus"/>
    <property type="evidence" value="ECO:0000318"/>
    <property type="project" value="GO_Central"/>
</dbReference>
<dbReference type="GO" id="GO:0005654">
    <property type="term" value="C:nucleoplasm"/>
    <property type="evidence" value="ECO:0000314"/>
    <property type="project" value="HPA"/>
</dbReference>
<dbReference type="GO" id="GO:0005634">
    <property type="term" value="C:nucleus"/>
    <property type="evidence" value="ECO:0000314"/>
    <property type="project" value="UniProtKB"/>
</dbReference>
<dbReference type="GO" id="GO:0031499">
    <property type="term" value="C:TRAMP complex"/>
    <property type="evidence" value="ECO:0000318"/>
    <property type="project" value="GO_Central"/>
</dbReference>
<dbReference type="GO" id="GO:0005524">
    <property type="term" value="F:ATP binding"/>
    <property type="evidence" value="ECO:0007669"/>
    <property type="project" value="UniProtKB-KW"/>
</dbReference>
<dbReference type="GO" id="GO:0070568">
    <property type="term" value="F:guanylyltransferase activity"/>
    <property type="evidence" value="ECO:0000315"/>
    <property type="project" value="UniProtKB"/>
</dbReference>
<dbReference type="GO" id="GO:0046872">
    <property type="term" value="F:metal ion binding"/>
    <property type="evidence" value="ECO:0007669"/>
    <property type="project" value="UniProtKB-KW"/>
</dbReference>
<dbReference type="GO" id="GO:1990817">
    <property type="term" value="F:poly(A) RNA polymerase activity"/>
    <property type="evidence" value="ECO:0000318"/>
    <property type="project" value="GO_Central"/>
</dbReference>
<dbReference type="GO" id="GO:0043221">
    <property type="term" value="F:SMC family protein binding"/>
    <property type="evidence" value="ECO:0000304"/>
    <property type="project" value="UniProtKB"/>
</dbReference>
<dbReference type="GO" id="GO:0006302">
    <property type="term" value="P:double-strand break repair"/>
    <property type="evidence" value="ECO:0000303"/>
    <property type="project" value="UniProtKB"/>
</dbReference>
<dbReference type="GO" id="GO:0007076">
    <property type="term" value="P:mitotic chromosome condensation"/>
    <property type="evidence" value="ECO:0000303"/>
    <property type="project" value="UniProtKB"/>
</dbReference>
<dbReference type="GO" id="GO:0006397">
    <property type="term" value="P:mRNA processing"/>
    <property type="evidence" value="ECO:0007669"/>
    <property type="project" value="UniProtKB-KW"/>
</dbReference>
<dbReference type="GO" id="GO:0060212">
    <property type="term" value="P:negative regulation of nuclear-transcribed mRNA poly(A) tail shortening"/>
    <property type="evidence" value="ECO:0000315"/>
    <property type="project" value="UniProtKB"/>
</dbReference>
<dbReference type="GO" id="GO:0043634">
    <property type="term" value="P:polyadenylation-dependent ncRNA catabolic process"/>
    <property type="evidence" value="ECO:0000318"/>
    <property type="project" value="GO_Central"/>
</dbReference>
<dbReference type="GO" id="GO:1905870">
    <property type="term" value="P:positive regulation of 3'-UTR-mediated mRNA stabilization"/>
    <property type="evidence" value="ECO:0000315"/>
    <property type="project" value="UniProtKB"/>
</dbReference>
<dbReference type="GO" id="GO:0009410">
    <property type="term" value="P:response to xenobiotic stimulus"/>
    <property type="evidence" value="ECO:0000314"/>
    <property type="project" value="UniProtKB"/>
</dbReference>
<dbReference type="GO" id="GO:0031123">
    <property type="term" value="P:RNA 3'-end processing"/>
    <property type="evidence" value="ECO:0000318"/>
    <property type="project" value="GO_Central"/>
</dbReference>
<dbReference type="GO" id="GO:0007062">
    <property type="term" value="P:sister chromatid cohesion"/>
    <property type="evidence" value="ECO:0000304"/>
    <property type="project" value="UniProtKB"/>
</dbReference>
<dbReference type="CDD" id="cd05402">
    <property type="entry name" value="NT_PAP_TUTase"/>
    <property type="match status" value="1"/>
</dbReference>
<dbReference type="FunFam" id="3.30.460.10:FF:000006">
    <property type="entry name" value="non-canonical poly(A) RNA polymerase PAPD5"/>
    <property type="match status" value="1"/>
</dbReference>
<dbReference type="FunFam" id="1.10.1410.10:FF:000003">
    <property type="entry name" value="non-canonical poly(A) RNA polymerase PAPD7"/>
    <property type="match status" value="1"/>
</dbReference>
<dbReference type="Gene3D" id="1.10.1410.10">
    <property type="match status" value="1"/>
</dbReference>
<dbReference type="Gene3D" id="3.30.460.10">
    <property type="entry name" value="Beta Polymerase, domain 2"/>
    <property type="match status" value="1"/>
</dbReference>
<dbReference type="InterPro" id="IPR054708">
    <property type="entry name" value="MTPAP-like_central"/>
</dbReference>
<dbReference type="InterPro" id="IPR043519">
    <property type="entry name" value="NT_sf"/>
</dbReference>
<dbReference type="InterPro" id="IPR002058">
    <property type="entry name" value="PAP_assoc"/>
</dbReference>
<dbReference type="InterPro" id="IPR045862">
    <property type="entry name" value="Trf4-like"/>
</dbReference>
<dbReference type="PANTHER" id="PTHR23092">
    <property type="entry name" value="POLY(A) RNA POLYMERASE"/>
    <property type="match status" value="1"/>
</dbReference>
<dbReference type="PANTHER" id="PTHR23092:SF24">
    <property type="entry name" value="TERMINAL NUCLEOTIDYLTRANSFERASE 4A"/>
    <property type="match status" value="1"/>
</dbReference>
<dbReference type="Pfam" id="PF22600">
    <property type="entry name" value="MTPAP-like_central"/>
    <property type="match status" value="1"/>
</dbReference>
<dbReference type="Pfam" id="PF03828">
    <property type="entry name" value="PAP_assoc"/>
    <property type="match status" value="1"/>
</dbReference>
<dbReference type="SUPFAM" id="SSF81301">
    <property type="entry name" value="Nucleotidyltransferase"/>
    <property type="match status" value="1"/>
</dbReference>
<dbReference type="SUPFAM" id="SSF81631">
    <property type="entry name" value="PAP/OAS1 substrate-binding domain"/>
    <property type="match status" value="1"/>
</dbReference>
<name>PAPD7_HUMAN</name>
<feature type="chain" id="PRO_0000120308" description="Terminal nucleotidyltransferase 4A">
    <location>
        <begin position="1"/>
        <end position="792"/>
    </location>
</feature>
<feature type="domain" description="PAP-associated" evidence="3">
    <location>
        <begin position="428"/>
        <end position="486"/>
    </location>
</feature>
<feature type="region of interest" description="Disordered" evidence="4">
    <location>
        <begin position="55"/>
        <end position="191"/>
    </location>
</feature>
<feature type="region of interest" description="Disordered" evidence="4">
    <location>
        <begin position="601"/>
        <end position="632"/>
    </location>
</feature>
<feature type="region of interest" description="Disordered" evidence="4">
    <location>
        <begin position="737"/>
        <end position="792"/>
    </location>
</feature>
<feature type="compositionally biased region" description="Low complexity" evidence="4">
    <location>
        <begin position="80"/>
        <end position="97"/>
    </location>
</feature>
<feature type="compositionally biased region" description="Low complexity" evidence="4">
    <location>
        <begin position="105"/>
        <end position="139"/>
    </location>
</feature>
<feature type="compositionally biased region" description="Low complexity" evidence="4">
    <location>
        <begin position="601"/>
        <end position="619"/>
    </location>
</feature>
<feature type="compositionally biased region" description="Gly residues" evidence="4">
    <location>
        <begin position="744"/>
        <end position="756"/>
    </location>
</feature>
<feature type="compositionally biased region" description="Basic residues" evidence="4">
    <location>
        <begin position="764"/>
        <end position="781"/>
    </location>
</feature>
<feature type="binding site" evidence="1">
    <location>
        <position position="297"/>
    </location>
    <ligand>
        <name>Mg(2+)</name>
        <dbReference type="ChEBI" id="CHEBI:18420"/>
        <note>catalytic</note>
    </ligand>
</feature>
<feature type="binding site" evidence="1">
    <location>
        <position position="299"/>
    </location>
    <ligand>
        <name>Mg(2+)</name>
        <dbReference type="ChEBI" id="CHEBI:18420"/>
        <note>catalytic</note>
    </ligand>
</feature>
<feature type="binding site" evidence="1">
    <location>
        <position position="360"/>
    </location>
    <ligand>
        <name>ATP</name>
        <dbReference type="ChEBI" id="CHEBI:30616"/>
    </ligand>
</feature>
<feature type="binding site" evidence="1">
    <location>
        <position position="385"/>
    </location>
    <ligand>
        <name>ATP</name>
        <dbReference type="ChEBI" id="CHEBI:30616"/>
    </ligand>
</feature>
<feature type="binding site" evidence="1">
    <location>
        <position position="403"/>
    </location>
    <ligand>
        <name>ATP</name>
        <dbReference type="ChEBI" id="CHEBI:30616"/>
    </ligand>
</feature>
<feature type="binding site" evidence="1">
    <location>
        <position position="404"/>
    </location>
    <ligand>
        <name>ATP</name>
        <dbReference type="ChEBI" id="CHEBI:30616"/>
    </ligand>
</feature>
<feature type="binding site" evidence="1">
    <location>
        <position position="488"/>
    </location>
    <ligand>
        <name>ATP</name>
        <dbReference type="ChEBI" id="CHEBI:30616"/>
    </ligand>
</feature>
<feature type="binding site" evidence="1">
    <location>
        <position position="492"/>
    </location>
    <ligand>
        <name>ATP</name>
        <dbReference type="ChEBI" id="CHEBI:30616"/>
    </ligand>
</feature>
<feature type="splice variant" id="VSP_053732" description="In isoform 2." evidence="8 9 10 12">
    <location>
        <begin position="21"/>
        <end position="250"/>
    </location>
</feature>
<feature type="sequence variant" id="VAR_021175" description="In dbSNP:rs28381415." evidence="7">
    <original>N</original>
    <variation>S</variation>
    <location>
        <position position="576"/>
    </location>
</feature>
<feature type="sequence variant" id="VAR_021176" description="In dbSNP:rs28381418." evidence="7">
    <original>G</original>
    <variation>S</variation>
    <location>
        <position position="646"/>
    </location>
</feature>
<feature type="mutagenesis site" description="Localizes to cytoplasm." evidence="5">
    <location>
        <begin position="187"/>
        <end position="250"/>
    </location>
</feature>
<gene>
    <name evidence="14" type="primary">TENT4A</name>
    <name evidence="11" type="synonym">PAPD7</name>
    <name evidence="14" type="synonym">POLS</name>
    <name evidence="8" type="synonym">TRF4</name>
</gene>
<protein>
    <recommendedName>
        <fullName evidence="13">Terminal nucleotidyltransferase 4A</fullName>
    </recommendedName>
    <alternativeName>
        <fullName>DNA polymerase sigma</fullName>
    </alternativeName>
    <alternativeName>
        <fullName>LAK-1</fullName>
    </alternativeName>
    <alternativeName>
        <fullName evidence="13">Non-canonical poly(A) RNA polymerase PAPD7</fullName>
        <ecNumber evidence="2">2.7.7.19</ecNumber>
    </alternativeName>
    <alternativeName>
        <fullName>PAP-associated domain-containing protein 7</fullName>
    </alternativeName>
    <alternativeName>
        <fullName>TRAMP-like complex polyadenylate polymerase</fullName>
    </alternativeName>
    <alternativeName>
        <fullName evidence="13">Terminal guanylyltransferase</fullName>
        <ecNumber evidence="6">2.7.7.-</ecNumber>
    </alternativeName>
    <alternativeName>
        <fullName>Terminal uridylyltransferase 5</fullName>
        <shortName>TUTase 5</shortName>
    </alternativeName>
    <alternativeName>
        <fullName>Topoisomerase-related function protein 4-1</fullName>
        <shortName>TRF4-1</shortName>
    </alternativeName>
</protein>
<sequence length="792" mass="84650">MDPRVAWIQPEQKGPANALWMQIWETSQGVGRGGSGFASYFCLNSPALDTAAAAGAAGRGSGGLGPALPAASPPPPGPTAPAALPPALLTALGPAAEGARRLHKSPSLSSSSSSSSSNAESGTESPGCSSSSSSSASLGRPGGGRGGAFFNFADGAPSAPGTANGHPGPRGPAPAGSPSQHQFHPGRRKRENKASTYGLNYLLSGSRAAALSGGGGPGAQAPRPGTPWKSRAYSPGIQGLHEEIIDFYNFMSPCPEEAAMRREVVKRIETVVKDLWPTADVQIFGSFSTGLYLPTSDIDLVVFGKWERPPLQLLEQALRKHNVAEPCSIKVLDKATVPIIKLTDQETEVKVDISFNMETGVRAAEFIKNYMKKYSLLPYLILVLKQFLLQRDLNEVFTGGISSYSLILMAISFLQLHPRIDARRADENLGMLLVEFFELYGRNFNYLKTGIRIKEGGAYIAKEEIMKAMTSGYRPSMLCIEDPLLPGNDVGRSSYGAMQVKQVFDYAYIVLSHAVSPLARSYPNRDAESTLGRIIKVTQEVIDYRRWIKEKWGSKAHPSPGMDSRIKIKERIATCNGEQTQNREPESPYGQRLTLSLSSPQLLSSGSSASSVSSLSGSDVDSDTPPCTTPSVYQFSLQAPAPLMAGLPTALPMPSGKPQPTTSRTLIMTTNNQTRFTIPPPTLGVAPVPCRQAGVEGTASLKAVHHMSSPAIPSASPNPLSSPHLYHKQHNGMKLSMKGSHGHTQGGGYSSVGSGGVRPPVGNRGHHQYNRTGWRRKKHTHTRDSLPVSLSR</sequence>
<reference key="1">
    <citation type="journal article" date="1999" name="J. Biol. Chem.">
        <title>The topoisomerase-related function gene TRF4 affects cellular sensitivity to the antitumor agent camptothecin.</title>
        <authorList>
            <person name="Walowsky C."/>
            <person name="Fitzhugh D.J."/>
            <person name="Castano I.B."/>
            <person name="Ju J.Y."/>
            <person name="Levin N.A."/>
            <person name="Christman M.F."/>
        </authorList>
    </citation>
    <scope>NUCLEOTIDE SEQUENCE [MRNA] (ISOFORM 2)</scope>
</reference>
<reference key="2">
    <citation type="submission" date="1997-07" db="EMBL/GenBank/DDBJ databases">
        <title>mLT positive LAK-cell clone No. 1.</title>
        <authorList>
            <person name="Abe Y."/>
            <person name="Takaoka Y."/>
        </authorList>
    </citation>
    <scope>NUCLEOTIDE SEQUENCE [MRNA] (ISOFORM 2)</scope>
</reference>
<reference key="3">
    <citation type="submission" date="2004-05" db="EMBL/GenBank/DDBJ databases">
        <authorList>
            <consortium name="NIEHS SNPs program"/>
        </authorList>
    </citation>
    <scope>NUCLEOTIDE SEQUENCE [GENOMIC DNA]</scope>
    <scope>VARIANTS SER-576 AND SER-646</scope>
</reference>
<reference key="4">
    <citation type="journal article" date="2004" name="Nat. Genet.">
        <title>Complete sequencing and characterization of 21,243 full-length human cDNAs.</title>
        <authorList>
            <person name="Ota T."/>
            <person name="Suzuki Y."/>
            <person name="Nishikawa T."/>
            <person name="Otsuki T."/>
            <person name="Sugiyama T."/>
            <person name="Irie R."/>
            <person name="Wakamatsu A."/>
            <person name="Hayashi K."/>
            <person name="Sato H."/>
            <person name="Nagai K."/>
            <person name="Kimura K."/>
            <person name="Makita H."/>
            <person name="Sekine M."/>
            <person name="Obayashi M."/>
            <person name="Nishi T."/>
            <person name="Shibahara T."/>
            <person name="Tanaka T."/>
            <person name="Ishii S."/>
            <person name="Yamamoto J."/>
            <person name="Saito K."/>
            <person name="Kawai Y."/>
            <person name="Isono Y."/>
            <person name="Nakamura Y."/>
            <person name="Nagahari K."/>
            <person name="Murakami K."/>
            <person name="Yasuda T."/>
            <person name="Iwayanagi T."/>
            <person name="Wagatsuma M."/>
            <person name="Shiratori A."/>
            <person name="Sudo H."/>
            <person name="Hosoiri T."/>
            <person name="Kaku Y."/>
            <person name="Kodaira H."/>
            <person name="Kondo H."/>
            <person name="Sugawara M."/>
            <person name="Takahashi M."/>
            <person name="Kanda K."/>
            <person name="Yokoi T."/>
            <person name="Furuya T."/>
            <person name="Kikkawa E."/>
            <person name="Omura Y."/>
            <person name="Abe K."/>
            <person name="Kamihara K."/>
            <person name="Katsuta N."/>
            <person name="Sato K."/>
            <person name="Tanikawa M."/>
            <person name="Yamazaki M."/>
            <person name="Ninomiya K."/>
            <person name="Ishibashi T."/>
            <person name="Yamashita H."/>
            <person name="Murakawa K."/>
            <person name="Fujimori K."/>
            <person name="Tanai H."/>
            <person name="Kimata M."/>
            <person name="Watanabe M."/>
            <person name="Hiraoka S."/>
            <person name="Chiba Y."/>
            <person name="Ishida S."/>
            <person name="Ono Y."/>
            <person name="Takiguchi S."/>
            <person name="Watanabe S."/>
            <person name="Yosida M."/>
            <person name="Hotuta T."/>
            <person name="Kusano J."/>
            <person name="Kanehori K."/>
            <person name="Takahashi-Fujii A."/>
            <person name="Hara H."/>
            <person name="Tanase T.-O."/>
            <person name="Nomura Y."/>
            <person name="Togiya S."/>
            <person name="Komai F."/>
            <person name="Hara R."/>
            <person name="Takeuchi K."/>
            <person name="Arita M."/>
            <person name="Imose N."/>
            <person name="Musashino K."/>
            <person name="Yuuki H."/>
            <person name="Oshima A."/>
            <person name="Sasaki N."/>
            <person name="Aotsuka S."/>
            <person name="Yoshikawa Y."/>
            <person name="Matsunawa H."/>
            <person name="Ichihara T."/>
            <person name="Shiohata N."/>
            <person name="Sano S."/>
            <person name="Moriya S."/>
            <person name="Momiyama H."/>
            <person name="Satoh N."/>
            <person name="Takami S."/>
            <person name="Terashima Y."/>
            <person name="Suzuki O."/>
            <person name="Nakagawa S."/>
            <person name="Senoh A."/>
            <person name="Mizoguchi H."/>
            <person name="Goto Y."/>
            <person name="Shimizu F."/>
            <person name="Wakebe H."/>
            <person name="Hishigaki H."/>
            <person name="Watanabe T."/>
            <person name="Sugiyama A."/>
            <person name="Takemoto M."/>
            <person name="Kawakami B."/>
            <person name="Yamazaki M."/>
            <person name="Watanabe K."/>
            <person name="Kumagai A."/>
            <person name="Itakura S."/>
            <person name="Fukuzumi Y."/>
            <person name="Fujimori Y."/>
            <person name="Komiyama M."/>
            <person name="Tashiro H."/>
            <person name="Tanigami A."/>
            <person name="Fujiwara T."/>
            <person name="Ono T."/>
            <person name="Yamada K."/>
            <person name="Fujii Y."/>
            <person name="Ozaki K."/>
            <person name="Hirao M."/>
            <person name="Ohmori Y."/>
            <person name="Kawabata A."/>
            <person name="Hikiji T."/>
            <person name="Kobatake N."/>
            <person name="Inagaki H."/>
            <person name="Ikema Y."/>
            <person name="Okamoto S."/>
            <person name="Okitani R."/>
            <person name="Kawakami T."/>
            <person name="Noguchi S."/>
            <person name="Itoh T."/>
            <person name="Shigeta K."/>
            <person name="Senba T."/>
            <person name="Matsumura K."/>
            <person name="Nakajima Y."/>
            <person name="Mizuno T."/>
            <person name="Morinaga M."/>
            <person name="Sasaki M."/>
            <person name="Togashi T."/>
            <person name="Oyama M."/>
            <person name="Hata H."/>
            <person name="Watanabe M."/>
            <person name="Komatsu T."/>
            <person name="Mizushima-Sugano J."/>
            <person name="Satoh T."/>
            <person name="Shirai Y."/>
            <person name="Takahashi Y."/>
            <person name="Nakagawa K."/>
            <person name="Okumura K."/>
            <person name="Nagase T."/>
            <person name="Nomura N."/>
            <person name="Kikuchi H."/>
            <person name="Masuho Y."/>
            <person name="Yamashita R."/>
            <person name="Nakai K."/>
            <person name="Yada T."/>
            <person name="Nakamura Y."/>
            <person name="Ohara O."/>
            <person name="Isogai T."/>
            <person name="Sugano S."/>
        </authorList>
    </citation>
    <scope>NUCLEOTIDE SEQUENCE [LARGE SCALE MRNA] (ISOFORM 2)</scope>
    <source>
        <tissue>Brain</tissue>
    </source>
</reference>
<reference key="5">
    <citation type="journal article" date="2004" name="Nature">
        <title>The DNA sequence and comparative analysis of human chromosome 5.</title>
        <authorList>
            <person name="Schmutz J."/>
            <person name="Martin J."/>
            <person name="Terry A."/>
            <person name="Couronne O."/>
            <person name="Grimwood J."/>
            <person name="Lowry S."/>
            <person name="Gordon L.A."/>
            <person name="Scott D."/>
            <person name="Xie G."/>
            <person name="Huang W."/>
            <person name="Hellsten U."/>
            <person name="Tran-Gyamfi M."/>
            <person name="She X."/>
            <person name="Prabhakar S."/>
            <person name="Aerts A."/>
            <person name="Altherr M."/>
            <person name="Bajorek E."/>
            <person name="Black S."/>
            <person name="Branscomb E."/>
            <person name="Caoile C."/>
            <person name="Challacombe J.F."/>
            <person name="Chan Y.M."/>
            <person name="Denys M."/>
            <person name="Detter J.C."/>
            <person name="Escobar J."/>
            <person name="Flowers D."/>
            <person name="Fotopulos D."/>
            <person name="Glavina T."/>
            <person name="Gomez M."/>
            <person name="Gonzales E."/>
            <person name="Goodstein D."/>
            <person name="Grigoriev I."/>
            <person name="Groza M."/>
            <person name="Hammon N."/>
            <person name="Hawkins T."/>
            <person name="Haydu L."/>
            <person name="Israni S."/>
            <person name="Jett J."/>
            <person name="Kadner K."/>
            <person name="Kimball H."/>
            <person name="Kobayashi A."/>
            <person name="Lopez F."/>
            <person name="Lou Y."/>
            <person name="Martinez D."/>
            <person name="Medina C."/>
            <person name="Morgan J."/>
            <person name="Nandkeshwar R."/>
            <person name="Noonan J.P."/>
            <person name="Pitluck S."/>
            <person name="Pollard M."/>
            <person name="Predki P."/>
            <person name="Priest J."/>
            <person name="Ramirez L."/>
            <person name="Retterer J."/>
            <person name="Rodriguez A."/>
            <person name="Rogers S."/>
            <person name="Salamov A."/>
            <person name="Salazar A."/>
            <person name="Thayer N."/>
            <person name="Tice H."/>
            <person name="Tsai M."/>
            <person name="Ustaszewska A."/>
            <person name="Vo N."/>
            <person name="Wheeler J."/>
            <person name="Wu K."/>
            <person name="Yang J."/>
            <person name="Dickson M."/>
            <person name="Cheng J.-F."/>
            <person name="Eichler E.E."/>
            <person name="Olsen A."/>
            <person name="Pennacchio L.A."/>
            <person name="Rokhsar D.S."/>
            <person name="Richardson P."/>
            <person name="Lucas S.M."/>
            <person name="Myers R.M."/>
            <person name="Rubin E.M."/>
        </authorList>
    </citation>
    <scope>NUCLEOTIDE SEQUENCE [LARGE SCALE GENOMIC DNA]</scope>
</reference>
<reference key="6">
    <citation type="submission" date="2005-09" db="EMBL/GenBank/DDBJ databases">
        <authorList>
            <person name="Mural R.J."/>
            <person name="Istrail S."/>
            <person name="Sutton G.G."/>
            <person name="Florea L."/>
            <person name="Halpern A.L."/>
            <person name="Mobarry C.M."/>
            <person name="Lippert R."/>
            <person name="Walenz B."/>
            <person name="Shatkay H."/>
            <person name="Dew I."/>
            <person name="Miller J.R."/>
            <person name="Flanigan M.J."/>
            <person name="Edwards N.J."/>
            <person name="Bolanos R."/>
            <person name="Fasulo D."/>
            <person name="Halldorsson B.V."/>
            <person name="Hannenhalli S."/>
            <person name="Turner R."/>
            <person name="Yooseph S."/>
            <person name="Lu F."/>
            <person name="Nusskern D.R."/>
            <person name="Shue B.C."/>
            <person name="Zheng X.H."/>
            <person name="Zhong F."/>
            <person name="Delcher A.L."/>
            <person name="Huson D.H."/>
            <person name="Kravitz S.A."/>
            <person name="Mouchard L."/>
            <person name="Reinert K."/>
            <person name="Remington K.A."/>
            <person name="Clark A.G."/>
            <person name="Waterman M.S."/>
            <person name="Eichler E.E."/>
            <person name="Adams M.D."/>
            <person name="Hunkapiller M.W."/>
            <person name="Myers E.W."/>
            <person name="Venter J.C."/>
        </authorList>
    </citation>
    <scope>NUCLEOTIDE SEQUENCE [LARGE SCALE GENOMIC DNA]</scope>
</reference>
<reference key="7">
    <citation type="journal article" date="2004" name="Genome Res.">
        <title>The status, quality, and expansion of the NIH full-length cDNA project: the Mammalian Gene Collection (MGC).</title>
        <authorList>
            <consortium name="The MGC Project Team"/>
        </authorList>
    </citation>
    <scope>NUCLEOTIDE SEQUENCE [LARGE SCALE MRNA] (ISOFORM 2)</scope>
    <source>
        <tissue>Cerebellum</tissue>
        <tissue>Lung</tissue>
    </source>
</reference>
<reference key="8">
    <citation type="journal article" date="2013" name="Biochem. Biophys. Res. Commun.">
        <title>Molecular cloning and characterization of a novel isoform of the non-canonical poly(A) polymerase PAPD7.</title>
        <authorList>
            <person name="Ogami K."/>
            <person name="Cho R."/>
            <person name="Hoshino S."/>
        </authorList>
    </citation>
    <scope>NUCLEOTIDE SEQUENCE [MRNA] OF 21-792 (ISOFORM 1)</scope>
    <scope>FUNCTION</scope>
    <scope>SUBCELLULAR LOCATION</scope>
    <scope>MUTAGENESIS OF 187-ARG--PHE-250</scope>
    <scope>ALTERNATIVE SPLICING</scope>
</reference>
<reference key="9">
    <citation type="journal article" date="2000" name="Science">
        <title>Pol kappa: a DNA polymerase required for sister chromatid cohesion.</title>
        <authorList>
            <person name="Wang Z."/>
            <person name="Castano I.B."/>
            <person name="De Las Penas A."/>
            <person name="Adams C."/>
            <person name="Christman M.F."/>
        </authorList>
    </citation>
    <scope>PRELIMINARY FUNCTION</scope>
</reference>
<reference key="10">
    <citation type="journal article" date="2001" name="Proc. Natl. Acad. Sci. U.S.A.">
        <title>Evidence that replication fork components catalyze establishment of cohesion between sister chromatids.</title>
        <authorList>
            <person name="Carson D.R."/>
            <person name="Christman M.F."/>
        </authorList>
    </citation>
    <scope>REVIEW</scope>
</reference>
<reference key="11">
    <citation type="journal article" date="2008" name="Genes Dev.">
        <title>Degradation of histone mRNA requires oligouridylation followed by decapping and simultaneous degradation of the mRNA both 5' to 3' and 3' to 5'.</title>
        <authorList>
            <person name="Mullen T.E."/>
            <person name="Marzluff W.F."/>
        </authorList>
    </citation>
    <scope>ABSENCE OF FUNCTION IN HISTONE MRNA DEGRADATION ACTIVITY</scope>
</reference>
<reference key="12">
    <citation type="journal article" date="2012" name="Biochem. Soc. Trans.">
        <title>Comparison of the yeast and human nuclear exosome complexes.</title>
        <authorList>
            <person name="Sloan K.E."/>
            <person name="Schneider C."/>
            <person name="Watkins N.J."/>
        </authorList>
    </citation>
    <scope>REVIEW ON RNA EXOSOMES</scope>
</reference>
<reference key="13">
    <citation type="journal article" date="2018" name="Science">
        <title>Mixed tailing by TENT4A and TENT4B shields mRNA from rapid deadenylation.</title>
        <authorList>
            <person name="Lim J."/>
            <person name="Kim D."/>
            <person name="Lee Y.S."/>
            <person name="Ha M."/>
            <person name="Lee M."/>
            <person name="Yeo J."/>
            <person name="Chang H."/>
            <person name="Song J."/>
            <person name="Ahn K."/>
            <person name="Kim V.N."/>
        </authorList>
    </citation>
    <scope>FUNCTION</scope>
</reference>
<evidence type="ECO:0000250" key="1">
    <source>
        <dbReference type="UniProtKB" id="O13833"/>
    </source>
</evidence>
<evidence type="ECO:0000250" key="2">
    <source>
        <dbReference type="UniProtKB" id="Q8NDF8"/>
    </source>
</evidence>
<evidence type="ECO:0000255" key="3"/>
<evidence type="ECO:0000256" key="4">
    <source>
        <dbReference type="SAM" id="MobiDB-lite"/>
    </source>
</evidence>
<evidence type="ECO:0000269" key="5">
    <source>
    </source>
</evidence>
<evidence type="ECO:0000269" key="6">
    <source>
    </source>
</evidence>
<evidence type="ECO:0000269" key="7">
    <source ref="3"/>
</evidence>
<evidence type="ECO:0000303" key="8">
    <source>
    </source>
</evidence>
<evidence type="ECO:0000303" key="9">
    <source>
    </source>
</evidence>
<evidence type="ECO:0000303" key="10">
    <source>
    </source>
</evidence>
<evidence type="ECO:0000303" key="11">
    <source>
    </source>
</evidence>
<evidence type="ECO:0000303" key="12">
    <source ref="2"/>
</evidence>
<evidence type="ECO:0000305" key="13"/>
<evidence type="ECO:0000312" key="14">
    <source>
        <dbReference type="HGNC" id="HGNC:16705"/>
    </source>
</evidence>
<proteinExistence type="evidence at protein level"/>
<accession>Q5XG87</accession>
<accession>A0A0X1KG68</accession>
<accession>A8K1E2</accession>
<accession>M1JCE6</accession>
<accession>O43289</accession>
<accession>Q17RZ1</accession>
<accession>Q9Y6C1</accession>